<feature type="chain" id="PRO_0000336423" description="Thiamine-phosphate synthase">
    <location>
        <begin position="1"/>
        <end position="228"/>
    </location>
</feature>
<feature type="binding site" evidence="1">
    <location>
        <begin position="57"/>
        <end position="61"/>
    </location>
    <ligand>
        <name>4-amino-2-methyl-5-(diphosphooxymethyl)pyrimidine</name>
        <dbReference type="ChEBI" id="CHEBI:57841"/>
    </ligand>
</feature>
<feature type="binding site" evidence="1">
    <location>
        <position position="89"/>
    </location>
    <ligand>
        <name>4-amino-2-methyl-5-(diphosphooxymethyl)pyrimidine</name>
        <dbReference type="ChEBI" id="CHEBI:57841"/>
    </ligand>
</feature>
<feature type="binding site" evidence="1">
    <location>
        <position position="90"/>
    </location>
    <ligand>
        <name>Mg(2+)</name>
        <dbReference type="ChEBI" id="CHEBI:18420"/>
    </ligand>
</feature>
<feature type="binding site" evidence="1">
    <location>
        <position position="109"/>
    </location>
    <ligand>
        <name>Mg(2+)</name>
        <dbReference type="ChEBI" id="CHEBI:18420"/>
    </ligand>
</feature>
<feature type="binding site" evidence="1">
    <location>
        <position position="128"/>
    </location>
    <ligand>
        <name>4-amino-2-methyl-5-(diphosphooxymethyl)pyrimidine</name>
        <dbReference type="ChEBI" id="CHEBI:57841"/>
    </ligand>
</feature>
<feature type="binding site" evidence="1">
    <location>
        <begin position="154"/>
        <end position="156"/>
    </location>
    <ligand>
        <name>2-[(2R,5Z)-2-carboxy-4-methylthiazol-5(2H)-ylidene]ethyl phosphate</name>
        <dbReference type="ChEBI" id="CHEBI:62899"/>
    </ligand>
</feature>
<feature type="binding site" evidence="1">
    <location>
        <position position="157"/>
    </location>
    <ligand>
        <name>4-amino-2-methyl-5-(diphosphooxymethyl)pyrimidine</name>
        <dbReference type="ChEBI" id="CHEBI:57841"/>
    </ligand>
</feature>
<feature type="binding site" evidence="1">
    <location>
        <position position="185"/>
    </location>
    <ligand>
        <name>2-[(2R,5Z)-2-carboxy-4-methylthiazol-5(2H)-ylidene]ethyl phosphate</name>
        <dbReference type="ChEBI" id="CHEBI:62899"/>
    </ligand>
</feature>
<feature type="binding site" evidence="1">
    <location>
        <begin position="205"/>
        <end position="206"/>
    </location>
    <ligand>
        <name>2-[(2R,5Z)-2-carboxy-4-methylthiazol-5(2H)-ylidene]ethyl phosphate</name>
        <dbReference type="ChEBI" id="CHEBI:62899"/>
    </ligand>
</feature>
<evidence type="ECO:0000255" key="1">
    <source>
        <dbReference type="HAMAP-Rule" id="MF_00097"/>
    </source>
</evidence>
<organism>
    <name type="scientific">Roseiflexus castenholzii (strain DSM 13941 / HLO8)</name>
    <dbReference type="NCBI Taxonomy" id="383372"/>
    <lineage>
        <taxon>Bacteria</taxon>
        <taxon>Bacillati</taxon>
        <taxon>Chloroflexota</taxon>
        <taxon>Chloroflexia</taxon>
        <taxon>Chloroflexales</taxon>
        <taxon>Roseiflexineae</taxon>
        <taxon>Roseiflexaceae</taxon>
        <taxon>Roseiflexus</taxon>
    </lineage>
</organism>
<keyword id="KW-0460">Magnesium</keyword>
<keyword id="KW-0479">Metal-binding</keyword>
<keyword id="KW-1185">Reference proteome</keyword>
<keyword id="KW-0784">Thiamine biosynthesis</keyword>
<keyword id="KW-0808">Transferase</keyword>
<accession>A7NRF7</accession>
<comment type="function">
    <text evidence="1">Condenses 4-methyl-5-(beta-hydroxyethyl)thiazole monophosphate (THZ-P) and 2-methyl-4-amino-5-hydroxymethyl pyrimidine pyrophosphate (HMP-PP) to form thiamine monophosphate (TMP).</text>
</comment>
<comment type="catalytic activity">
    <reaction evidence="1">
        <text>2-[(2R,5Z)-2-carboxy-4-methylthiazol-5(2H)-ylidene]ethyl phosphate + 4-amino-2-methyl-5-(diphosphooxymethyl)pyrimidine + 2 H(+) = thiamine phosphate + CO2 + diphosphate</text>
        <dbReference type="Rhea" id="RHEA:47844"/>
        <dbReference type="ChEBI" id="CHEBI:15378"/>
        <dbReference type="ChEBI" id="CHEBI:16526"/>
        <dbReference type="ChEBI" id="CHEBI:33019"/>
        <dbReference type="ChEBI" id="CHEBI:37575"/>
        <dbReference type="ChEBI" id="CHEBI:57841"/>
        <dbReference type="ChEBI" id="CHEBI:62899"/>
        <dbReference type="EC" id="2.5.1.3"/>
    </reaction>
</comment>
<comment type="catalytic activity">
    <reaction evidence="1">
        <text>2-(2-carboxy-4-methylthiazol-5-yl)ethyl phosphate + 4-amino-2-methyl-5-(diphosphooxymethyl)pyrimidine + 2 H(+) = thiamine phosphate + CO2 + diphosphate</text>
        <dbReference type="Rhea" id="RHEA:47848"/>
        <dbReference type="ChEBI" id="CHEBI:15378"/>
        <dbReference type="ChEBI" id="CHEBI:16526"/>
        <dbReference type="ChEBI" id="CHEBI:33019"/>
        <dbReference type="ChEBI" id="CHEBI:37575"/>
        <dbReference type="ChEBI" id="CHEBI:57841"/>
        <dbReference type="ChEBI" id="CHEBI:62890"/>
        <dbReference type="EC" id="2.5.1.3"/>
    </reaction>
</comment>
<comment type="catalytic activity">
    <reaction evidence="1">
        <text>4-methyl-5-(2-phosphooxyethyl)-thiazole + 4-amino-2-methyl-5-(diphosphooxymethyl)pyrimidine + H(+) = thiamine phosphate + diphosphate</text>
        <dbReference type="Rhea" id="RHEA:22328"/>
        <dbReference type="ChEBI" id="CHEBI:15378"/>
        <dbReference type="ChEBI" id="CHEBI:33019"/>
        <dbReference type="ChEBI" id="CHEBI:37575"/>
        <dbReference type="ChEBI" id="CHEBI:57841"/>
        <dbReference type="ChEBI" id="CHEBI:58296"/>
        <dbReference type="EC" id="2.5.1.3"/>
    </reaction>
</comment>
<comment type="cofactor">
    <cofactor evidence="1">
        <name>Mg(2+)</name>
        <dbReference type="ChEBI" id="CHEBI:18420"/>
    </cofactor>
    <text evidence="1">Binds 1 Mg(2+) ion per subunit.</text>
</comment>
<comment type="pathway">
    <text evidence="1">Cofactor biosynthesis; thiamine diphosphate biosynthesis; thiamine phosphate from 4-amino-2-methyl-5-diphosphomethylpyrimidine and 4-methyl-5-(2-phosphoethyl)-thiazole: step 1/1.</text>
</comment>
<comment type="similarity">
    <text evidence="1">Belongs to the thiamine-phosphate synthase family.</text>
</comment>
<reference key="1">
    <citation type="submission" date="2007-08" db="EMBL/GenBank/DDBJ databases">
        <title>Complete sequence of Roseiflexus castenholzii DSM 13941.</title>
        <authorList>
            <consortium name="US DOE Joint Genome Institute"/>
            <person name="Copeland A."/>
            <person name="Lucas S."/>
            <person name="Lapidus A."/>
            <person name="Barry K."/>
            <person name="Glavina del Rio T."/>
            <person name="Dalin E."/>
            <person name="Tice H."/>
            <person name="Pitluck S."/>
            <person name="Thompson L.S."/>
            <person name="Brettin T."/>
            <person name="Bruce D."/>
            <person name="Detter J.C."/>
            <person name="Han C."/>
            <person name="Tapia R."/>
            <person name="Schmutz J."/>
            <person name="Larimer F."/>
            <person name="Land M."/>
            <person name="Hauser L."/>
            <person name="Kyrpides N."/>
            <person name="Mikhailova N."/>
            <person name="Bryant D.A."/>
            <person name="Hanada S."/>
            <person name="Tsukatani Y."/>
            <person name="Richardson P."/>
        </authorList>
    </citation>
    <scope>NUCLEOTIDE SEQUENCE [LARGE SCALE GENOMIC DNA]</scope>
    <source>
        <strain>DSM 13941 / HLO8</strain>
    </source>
</reference>
<name>THIE_ROSCS</name>
<gene>
    <name evidence="1" type="primary">thiE</name>
    <name type="ordered locus">Rcas_4121</name>
</gene>
<proteinExistence type="inferred from homology"/>
<sequence>MAWSTLVDPSPSVLTNPIPFPSGRGIVYVITDRRAAGERSLIDIVHAALRGGANAIQLRDKDVPARAMIALGEALLPLTRAAGVPLIVNDRVDVALALDADGVHVGQDDIPADMVRRIIGPARILGVSVATVEQAQQAARDGATYVSVGDLFGTPSKPDAGPPIGLTPLTEIARAVDLPVLGIGGITVANAASVVRAGAVGVAVISAVIGAPDPEAATRALCDVAAQR</sequence>
<protein>
    <recommendedName>
        <fullName evidence="1">Thiamine-phosphate synthase</fullName>
        <shortName evidence="1">TP synthase</shortName>
        <shortName evidence="1">TPS</shortName>
        <ecNumber evidence="1">2.5.1.3</ecNumber>
    </recommendedName>
    <alternativeName>
        <fullName evidence="1">Thiamine-phosphate pyrophosphorylase</fullName>
        <shortName evidence="1">TMP pyrophosphorylase</shortName>
        <shortName evidence="1">TMP-PPase</shortName>
    </alternativeName>
</protein>
<dbReference type="EC" id="2.5.1.3" evidence="1"/>
<dbReference type="EMBL" id="CP000804">
    <property type="protein sequence ID" value="ABU60153.1"/>
    <property type="molecule type" value="Genomic_DNA"/>
</dbReference>
<dbReference type="RefSeq" id="WP_012122574.1">
    <property type="nucleotide sequence ID" value="NC_009767.1"/>
</dbReference>
<dbReference type="SMR" id="A7NRF7"/>
<dbReference type="STRING" id="383372.Rcas_4121"/>
<dbReference type="KEGG" id="rca:Rcas_4121"/>
<dbReference type="eggNOG" id="COG0352">
    <property type="taxonomic scope" value="Bacteria"/>
</dbReference>
<dbReference type="HOGENOM" id="CLU_018272_3_2_0"/>
<dbReference type="OrthoDB" id="9812206at2"/>
<dbReference type="UniPathway" id="UPA00060">
    <property type="reaction ID" value="UER00141"/>
</dbReference>
<dbReference type="Proteomes" id="UP000000263">
    <property type="component" value="Chromosome"/>
</dbReference>
<dbReference type="GO" id="GO:0005737">
    <property type="term" value="C:cytoplasm"/>
    <property type="evidence" value="ECO:0007669"/>
    <property type="project" value="TreeGrafter"/>
</dbReference>
<dbReference type="GO" id="GO:0000287">
    <property type="term" value="F:magnesium ion binding"/>
    <property type="evidence" value="ECO:0007669"/>
    <property type="project" value="UniProtKB-UniRule"/>
</dbReference>
<dbReference type="GO" id="GO:0004789">
    <property type="term" value="F:thiamine-phosphate diphosphorylase activity"/>
    <property type="evidence" value="ECO:0007669"/>
    <property type="project" value="UniProtKB-UniRule"/>
</dbReference>
<dbReference type="GO" id="GO:0009228">
    <property type="term" value="P:thiamine biosynthetic process"/>
    <property type="evidence" value="ECO:0007669"/>
    <property type="project" value="UniProtKB-KW"/>
</dbReference>
<dbReference type="GO" id="GO:0009229">
    <property type="term" value="P:thiamine diphosphate biosynthetic process"/>
    <property type="evidence" value="ECO:0007669"/>
    <property type="project" value="UniProtKB-UniRule"/>
</dbReference>
<dbReference type="CDD" id="cd00564">
    <property type="entry name" value="TMP_TenI"/>
    <property type="match status" value="1"/>
</dbReference>
<dbReference type="FunFam" id="3.20.20.70:FF:000096">
    <property type="entry name" value="Thiamine-phosphate synthase"/>
    <property type="match status" value="1"/>
</dbReference>
<dbReference type="Gene3D" id="3.20.20.70">
    <property type="entry name" value="Aldolase class I"/>
    <property type="match status" value="1"/>
</dbReference>
<dbReference type="HAMAP" id="MF_00097">
    <property type="entry name" value="TMP_synthase"/>
    <property type="match status" value="1"/>
</dbReference>
<dbReference type="InterPro" id="IPR013785">
    <property type="entry name" value="Aldolase_TIM"/>
</dbReference>
<dbReference type="InterPro" id="IPR036206">
    <property type="entry name" value="ThiamineP_synth_sf"/>
</dbReference>
<dbReference type="InterPro" id="IPR022998">
    <property type="entry name" value="ThiamineP_synth_TenI"/>
</dbReference>
<dbReference type="InterPro" id="IPR034291">
    <property type="entry name" value="TMP_synthase"/>
</dbReference>
<dbReference type="NCBIfam" id="TIGR00693">
    <property type="entry name" value="thiE"/>
    <property type="match status" value="1"/>
</dbReference>
<dbReference type="PANTHER" id="PTHR20857">
    <property type="entry name" value="THIAMINE-PHOSPHATE PYROPHOSPHORYLASE"/>
    <property type="match status" value="1"/>
</dbReference>
<dbReference type="PANTHER" id="PTHR20857:SF15">
    <property type="entry name" value="THIAMINE-PHOSPHATE SYNTHASE"/>
    <property type="match status" value="1"/>
</dbReference>
<dbReference type="Pfam" id="PF02581">
    <property type="entry name" value="TMP-TENI"/>
    <property type="match status" value="1"/>
</dbReference>
<dbReference type="SUPFAM" id="SSF51391">
    <property type="entry name" value="Thiamin phosphate synthase"/>
    <property type="match status" value="1"/>
</dbReference>